<organism>
    <name type="scientific">Bacillus velezensis (strain DSM 23117 / BGSC 10A6 / LMG 26770 / FZB42)</name>
    <name type="common">Bacillus amyloliquefaciens subsp. plantarum</name>
    <dbReference type="NCBI Taxonomy" id="326423"/>
    <lineage>
        <taxon>Bacteria</taxon>
        <taxon>Bacillati</taxon>
        <taxon>Bacillota</taxon>
        <taxon>Bacilli</taxon>
        <taxon>Bacillales</taxon>
        <taxon>Bacillaceae</taxon>
        <taxon>Bacillus</taxon>
        <taxon>Bacillus amyloliquefaciens group</taxon>
    </lineage>
</organism>
<evidence type="ECO:0000255" key="1">
    <source>
        <dbReference type="HAMAP-Rule" id="MF_01396"/>
    </source>
</evidence>
<protein>
    <recommendedName>
        <fullName evidence="1">ATP synthase subunit c</fullName>
    </recommendedName>
    <alternativeName>
        <fullName evidence="1">ATP synthase F(0) sector subunit c</fullName>
    </alternativeName>
    <alternativeName>
        <fullName evidence="1">F-type ATPase subunit c</fullName>
        <shortName evidence="1">F-ATPase subunit c</shortName>
    </alternativeName>
    <alternativeName>
        <fullName evidence="1">Lipid-binding protein</fullName>
    </alternativeName>
</protein>
<comment type="function">
    <text evidence="1">F(1)F(0) ATP synthase produces ATP from ADP in the presence of a proton or sodium gradient. F-type ATPases consist of two structural domains, F(1) containing the extramembraneous catalytic core and F(0) containing the membrane proton channel, linked together by a central stalk and a peripheral stalk. During catalysis, ATP synthesis in the catalytic domain of F(1) is coupled via a rotary mechanism of the central stalk subunits to proton translocation.</text>
</comment>
<comment type="function">
    <text evidence="1">Key component of the F(0) channel; it plays a direct role in translocation across the membrane. A homomeric c-ring of between 10-14 subunits forms the central stalk rotor element with the F(1) delta and epsilon subunits.</text>
</comment>
<comment type="subunit">
    <text evidence="1">F-type ATPases have 2 components, F(1) - the catalytic core - and F(0) - the membrane proton channel. F(1) has five subunits: alpha(3), beta(3), gamma(1), delta(1), epsilon(1). F(0) has three main subunits: a(1), b(2) and c(10-14). The alpha and beta chains form an alternating ring which encloses part of the gamma chain. F(1) is attached to F(0) by a central stalk formed by the gamma and epsilon chains, while a peripheral stalk is formed by the delta and b chains.</text>
</comment>
<comment type="subcellular location">
    <subcellularLocation>
        <location evidence="1">Cell membrane</location>
        <topology evidence="1">Multi-pass membrane protein</topology>
    </subcellularLocation>
</comment>
<comment type="similarity">
    <text evidence="1">Belongs to the ATPase C chain family.</text>
</comment>
<name>ATPL_BACVZ</name>
<feature type="chain" id="PRO_1000184322" description="ATP synthase subunit c">
    <location>
        <begin position="1"/>
        <end position="70"/>
    </location>
</feature>
<feature type="transmembrane region" description="Helical" evidence="1">
    <location>
        <begin position="4"/>
        <end position="24"/>
    </location>
</feature>
<feature type="transmembrane region" description="Helical" evidence="1">
    <location>
        <begin position="49"/>
        <end position="69"/>
    </location>
</feature>
<feature type="site" description="Reversibly protonated during proton transport" evidence="1">
    <location>
        <position position="54"/>
    </location>
</feature>
<sequence>MNLIAAAIAIGLGALGAGIGNGLIVSRTVEGIARQPEAGKELRTLMFMGIALVEALPIIAVVIAFLAFFG</sequence>
<dbReference type="EMBL" id="CP000560">
    <property type="protein sequence ID" value="ABS75731.1"/>
    <property type="molecule type" value="Genomic_DNA"/>
</dbReference>
<dbReference type="RefSeq" id="WP_003151167.1">
    <property type="nucleotide sequence ID" value="NC_009725.2"/>
</dbReference>
<dbReference type="SMR" id="A7Z9Q5"/>
<dbReference type="GeneID" id="93082546"/>
<dbReference type="KEGG" id="bay:RBAM_034020"/>
<dbReference type="HOGENOM" id="CLU_148047_1_1_9"/>
<dbReference type="Proteomes" id="UP000001120">
    <property type="component" value="Chromosome"/>
</dbReference>
<dbReference type="GO" id="GO:0005886">
    <property type="term" value="C:plasma membrane"/>
    <property type="evidence" value="ECO:0007669"/>
    <property type="project" value="UniProtKB-SubCell"/>
</dbReference>
<dbReference type="GO" id="GO:0045259">
    <property type="term" value="C:proton-transporting ATP synthase complex"/>
    <property type="evidence" value="ECO:0007669"/>
    <property type="project" value="UniProtKB-KW"/>
</dbReference>
<dbReference type="GO" id="GO:0033177">
    <property type="term" value="C:proton-transporting two-sector ATPase complex, proton-transporting domain"/>
    <property type="evidence" value="ECO:0007669"/>
    <property type="project" value="InterPro"/>
</dbReference>
<dbReference type="GO" id="GO:0008289">
    <property type="term" value="F:lipid binding"/>
    <property type="evidence" value="ECO:0007669"/>
    <property type="project" value="UniProtKB-KW"/>
</dbReference>
<dbReference type="GO" id="GO:0046933">
    <property type="term" value="F:proton-transporting ATP synthase activity, rotational mechanism"/>
    <property type="evidence" value="ECO:0007669"/>
    <property type="project" value="UniProtKB-UniRule"/>
</dbReference>
<dbReference type="CDD" id="cd18185">
    <property type="entry name" value="ATP-synt_Fo_c_ATPE"/>
    <property type="match status" value="1"/>
</dbReference>
<dbReference type="FunFam" id="1.20.20.10:FF:000004">
    <property type="entry name" value="ATP synthase subunit c"/>
    <property type="match status" value="1"/>
</dbReference>
<dbReference type="Gene3D" id="1.20.20.10">
    <property type="entry name" value="F1F0 ATP synthase subunit C"/>
    <property type="match status" value="1"/>
</dbReference>
<dbReference type="HAMAP" id="MF_01396">
    <property type="entry name" value="ATP_synth_c_bact"/>
    <property type="match status" value="1"/>
</dbReference>
<dbReference type="InterPro" id="IPR005953">
    <property type="entry name" value="ATP_synth_csu_bac/chlpt"/>
</dbReference>
<dbReference type="InterPro" id="IPR000454">
    <property type="entry name" value="ATP_synth_F0_csu"/>
</dbReference>
<dbReference type="InterPro" id="IPR020537">
    <property type="entry name" value="ATP_synth_F0_csu_DDCD_BS"/>
</dbReference>
<dbReference type="InterPro" id="IPR038662">
    <property type="entry name" value="ATP_synth_F0_csu_sf"/>
</dbReference>
<dbReference type="InterPro" id="IPR002379">
    <property type="entry name" value="ATPase_proteolipid_c-like_dom"/>
</dbReference>
<dbReference type="InterPro" id="IPR035921">
    <property type="entry name" value="F/V-ATP_Csub_sf"/>
</dbReference>
<dbReference type="NCBIfam" id="TIGR01260">
    <property type="entry name" value="ATP_synt_c"/>
    <property type="match status" value="1"/>
</dbReference>
<dbReference type="NCBIfam" id="NF005363">
    <property type="entry name" value="PRK06876.1"/>
    <property type="match status" value="1"/>
</dbReference>
<dbReference type="PANTHER" id="PTHR10031">
    <property type="entry name" value="ATP SYNTHASE LIPID-BINDING PROTEIN, MITOCHONDRIAL"/>
    <property type="match status" value="1"/>
</dbReference>
<dbReference type="PANTHER" id="PTHR10031:SF0">
    <property type="entry name" value="ATPASE PROTEIN 9"/>
    <property type="match status" value="1"/>
</dbReference>
<dbReference type="Pfam" id="PF00137">
    <property type="entry name" value="ATP-synt_C"/>
    <property type="match status" value="1"/>
</dbReference>
<dbReference type="PRINTS" id="PR00124">
    <property type="entry name" value="ATPASEC"/>
</dbReference>
<dbReference type="SUPFAM" id="SSF81333">
    <property type="entry name" value="F1F0 ATP synthase subunit C"/>
    <property type="match status" value="1"/>
</dbReference>
<dbReference type="PROSITE" id="PS00605">
    <property type="entry name" value="ATPASE_C"/>
    <property type="match status" value="1"/>
</dbReference>
<reference key="1">
    <citation type="journal article" date="2007" name="Nat. Biotechnol.">
        <title>Comparative analysis of the complete genome sequence of the plant growth-promoting bacterium Bacillus amyloliquefaciens FZB42.</title>
        <authorList>
            <person name="Chen X.H."/>
            <person name="Koumoutsi A."/>
            <person name="Scholz R."/>
            <person name="Eisenreich A."/>
            <person name="Schneider K."/>
            <person name="Heinemeyer I."/>
            <person name="Morgenstern B."/>
            <person name="Voss B."/>
            <person name="Hess W.R."/>
            <person name="Reva O."/>
            <person name="Junge H."/>
            <person name="Voigt B."/>
            <person name="Jungblut P.R."/>
            <person name="Vater J."/>
            <person name="Suessmuth R."/>
            <person name="Liesegang H."/>
            <person name="Strittmatter A."/>
            <person name="Gottschalk G."/>
            <person name="Borriss R."/>
        </authorList>
    </citation>
    <scope>NUCLEOTIDE SEQUENCE [LARGE SCALE GENOMIC DNA]</scope>
    <source>
        <strain>DSM 23117 / BGSC 10A6 / LMG 26770 / FZB42</strain>
    </source>
</reference>
<gene>
    <name evidence="1" type="primary">atpE</name>
    <name type="ordered locus">RBAM_034020</name>
</gene>
<accession>A7Z9Q5</accession>
<keyword id="KW-0066">ATP synthesis</keyword>
<keyword id="KW-1003">Cell membrane</keyword>
<keyword id="KW-0138">CF(0)</keyword>
<keyword id="KW-0375">Hydrogen ion transport</keyword>
<keyword id="KW-0406">Ion transport</keyword>
<keyword id="KW-0446">Lipid-binding</keyword>
<keyword id="KW-0472">Membrane</keyword>
<keyword id="KW-0812">Transmembrane</keyword>
<keyword id="KW-1133">Transmembrane helix</keyword>
<keyword id="KW-0813">Transport</keyword>
<proteinExistence type="inferred from homology"/>